<organism>
    <name type="scientific">Porphyromonas gingivalis (strain ATCC 33277 / DSM 20709 / CIP 103683 / JCM 12257 / NCTC 11834 / 2561)</name>
    <dbReference type="NCBI Taxonomy" id="431947"/>
    <lineage>
        <taxon>Bacteria</taxon>
        <taxon>Pseudomonadati</taxon>
        <taxon>Bacteroidota</taxon>
        <taxon>Bacteroidia</taxon>
        <taxon>Bacteroidales</taxon>
        <taxon>Porphyromonadaceae</taxon>
        <taxon>Porphyromonas</taxon>
    </lineage>
</organism>
<name>LEPA_PORG3</name>
<dbReference type="EC" id="3.6.5.n1" evidence="1"/>
<dbReference type="EMBL" id="AP009380">
    <property type="protein sequence ID" value="BAG33896.1"/>
    <property type="molecule type" value="Genomic_DNA"/>
</dbReference>
<dbReference type="RefSeq" id="WP_012458227.1">
    <property type="nucleotide sequence ID" value="NC_010729.1"/>
</dbReference>
<dbReference type="SMR" id="B2RKK1"/>
<dbReference type="GeneID" id="29256565"/>
<dbReference type="KEGG" id="pgn:PGN_1377"/>
<dbReference type="eggNOG" id="COG0481">
    <property type="taxonomic scope" value="Bacteria"/>
</dbReference>
<dbReference type="HOGENOM" id="CLU_009995_3_3_10"/>
<dbReference type="OrthoDB" id="9801591at2"/>
<dbReference type="BioCyc" id="PGIN431947:G1G2V-1561-MONOMER"/>
<dbReference type="Proteomes" id="UP000008842">
    <property type="component" value="Chromosome"/>
</dbReference>
<dbReference type="GO" id="GO:0005886">
    <property type="term" value="C:plasma membrane"/>
    <property type="evidence" value="ECO:0007669"/>
    <property type="project" value="UniProtKB-SubCell"/>
</dbReference>
<dbReference type="GO" id="GO:0005525">
    <property type="term" value="F:GTP binding"/>
    <property type="evidence" value="ECO:0007669"/>
    <property type="project" value="UniProtKB-UniRule"/>
</dbReference>
<dbReference type="GO" id="GO:0003924">
    <property type="term" value="F:GTPase activity"/>
    <property type="evidence" value="ECO:0007669"/>
    <property type="project" value="UniProtKB-UniRule"/>
</dbReference>
<dbReference type="GO" id="GO:0043022">
    <property type="term" value="F:ribosome binding"/>
    <property type="evidence" value="ECO:0007669"/>
    <property type="project" value="UniProtKB-UniRule"/>
</dbReference>
<dbReference type="GO" id="GO:0003746">
    <property type="term" value="F:translation elongation factor activity"/>
    <property type="evidence" value="ECO:0007669"/>
    <property type="project" value="UniProtKB-UniRule"/>
</dbReference>
<dbReference type="GO" id="GO:0045727">
    <property type="term" value="P:positive regulation of translation"/>
    <property type="evidence" value="ECO:0007669"/>
    <property type="project" value="UniProtKB-UniRule"/>
</dbReference>
<dbReference type="CDD" id="cd03699">
    <property type="entry name" value="EF4_II"/>
    <property type="match status" value="1"/>
</dbReference>
<dbReference type="CDD" id="cd16260">
    <property type="entry name" value="EF4_III"/>
    <property type="match status" value="1"/>
</dbReference>
<dbReference type="CDD" id="cd01890">
    <property type="entry name" value="LepA"/>
    <property type="match status" value="1"/>
</dbReference>
<dbReference type="CDD" id="cd03709">
    <property type="entry name" value="lepA_C"/>
    <property type="match status" value="1"/>
</dbReference>
<dbReference type="FunFam" id="3.40.50.300:FF:000078">
    <property type="entry name" value="Elongation factor 4"/>
    <property type="match status" value="1"/>
</dbReference>
<dbReference type="FunFam" id="2.40.30.10:FF:000015">
    <property type="entry name" value="Translation factor GUF1, mitochondrial"/>
    <property type="match status" value="1"/>
</dbReference>
<dbReference type="FunFam" id="3.30.70.240:FF:000007">
    <property type="entry name" value="Translation factor GUF1, mitochondrial"/>
    <property type="match status" value="1"/>
</dbReference>
<dbReference type="FunFam" id="3.30.70.2570:FF:000001">
    <property type="entry name" value="Translation factor GUF1, mitochondrial"/>
    <property type="match status" value="1"/>
</dbReference>
<dbReference type="FunFam" id="3.30.70.870:FF:000004">
    <property type="entry name" value="Translation factor GUF1, mitochondrial"/>
    <property type="match status" value="1"/>
</dbReference>
<dbReference type="Gene3D" id="3.30.70.240">
    <property type="match status" value="1"/>
</dbReference>
<dbReference type="Gene3D" id="3.30.70.2570">
    <property type="entry name" value="Elongation factor 4, C-terminal domain"/>
    <property type="match status" value="1"/>
</dbReference>
<dbReference type="Gene3D" id="3.30.70.870">
    <property type="entry name" value="Elongation Factor G (Translational Gtpase), domain 3"/>
    <property type="match status" value="1"/>
</dbReference>
<dbReference type="Gene3D" id="3.40.50.300">
    <property type="entry name" value="P-loop containing nucleotide triphosphate hydrolases"/>
    <property type="match status" value="1"/>
</dbReference>
<dbReference type="Gene3D" id="2.40.30.10">
    <property type="entry name" value="Translation factors"/>
    <property type="match status" value="1"/>
</dbReference>
<dbReference type="HAMAP" id="MF_00071">
    <property type="entry name" value="LepA"/>
    <property type="match status" value="1"/>
</dbReference>
<dbReference type="InterPro" id="IPR006297">
    <property type="entry name" value="EF-4"/>
</dbReference>
<dbReference type="InterPro" id="IPR035647">
    <property type="entry name" value="EFG_III/V"/>
</dbReference>
<dbReference type="InterPro" id="IPR000640">
    <property type="entry name" value="EFG_V-like"/>
</dbReference>
<dbReference type="InterPro" id="IPR004161">
    <property type="entry name" value="EFTu-like_2"/>
</dbReference>
<dbReference type="InterPro" id="IPR038363">
    <property type="entry name" value="LepA_C_sf"/>
</dbReference>
<dbReference type="InterPro" id="IPR013842">
    <property type="entry name" value="LepA_CTD"/>
</dbReference>
<dbReference type="InterPro" id="IPR035654">
    <property type="entry name" value="LepA_IV"/>
</dbReference>
<dbReference type="InterPro" id="IPR027417">
    <property type="entry name" value="P-loop_NTPase"/>
</dbReference>
<dbReference type="InterPro" id="IPR005225">
    <property type="entry name" value="Small_GTP-bd"/>
</dbReference>
<dbReference type="InterPro" id="IPR000795">
    <property type="entry name" value="T_Tr_GTP-bd_dom"/>
</dbReference>
<dbReference type="InterPro" id="IPR009000">
    <property type="entry name" value="Transl_B-barrel_sf"/>
</dbReference>
<dbReference type="NCBIfam" id="TIGR01393">
    <property type="entry name" value="lepA"/>
    <property type="match status" value="1"/>
</dbReference>
<dbReference type="NCBIfam" id="TIGR00231">
    <property type="entry name" value="small_GTP"/>
    <property type="match status" value="1"/>
</dbReference>
<dbReference type="PANTHER" id="PTHR43512:SF4">
    <property type="entry name" value="TRANSLATION FACTOR GUF1 HOMOLOG, CHLOROPLASTIC"/>
    <property type="match status" value="1"/>
</dbReference>
<dbReference type="PANTHER" id="PTHR43512">
    <property type="entry name" value="TRANSLATION FACTOR GUF1-RELATED"/>
    <property type="match status" value="1"/>
</dbReference>
<dbReference type="Pfam" id="PF00679">
    <property type="entry name" value="EFG_C"/>
    <property type="match status" value="1"/>
</dbReference>
<dbReference type="Pfam" id="PF00009">
    <property type="entry name" value="GTP_EFTU"/>
    <property type="match status" value="1"/>
</dbReference>
<dbReference type="Pfam" id="PF03144">
    <property type="entry name" value="GTP_EFTU_D2"/>
    <property type="match status" value="1"/>
</dbReference>
<dbReference type="Pfam" id="PF06421">
    <property type="entry name" value="LepA_C"/>
    <property type="match status" value="1"/>
</dbReference>
<dbReference type="PRINTS" id="PR00315">
    <property type="entry name" value="ELONGATNFCT"/>
</dbReference>
<dbReference type="SUPFAM" id="SSF54980">
    <property type="entry name" value="EF-G C-terminal domain-like"/>
    <property type="match status" value="2"/>
</dbReference>
<dbReference type="SUPFAM" id="SSF52540">
    <property type="entry name" value="P-loop containing nucleoside triphosphate hydrolases"/>
    <property type="match status" value="1"/>
</dbReference>
<dbReference type="SUPFAM" id="SSF50447">
    <property type="entry name" value="Translation proteins"/>
    <property type="match status" value="1"/>
</dbReference>
<dbReference type="PROSITE" id="PS51722">
    <property type="entry name" value="G_TR_2"/>
    <property type="match status" value="1"/>
</dbReference>
<accession>B2RKK1</accession>
<proteinExistence type="inferred from homology"/>
<sequence>MKNIRNFCIIAHIDHGKSTLADRLLEYTNTVSGKDLQDQVLDNMDLERERGITIKSHAIQMDYEMDGEKYVLNLIDTPGHVDFSYEVSRSIAACEGALLIVDAAQGIQAQTISNLYMAIENDLTIIPIVNKVDLPSAMPEEVEDQIIELLGCDRSEIIRASGKTGQGVDQILRAIVEQVPAPAGDPDAPLQCLIFDSVFNPFRGIIAYFKVVNGSIRKGDHVKFIATEKEYDADEVGVLRLDMEPRSEVKTGDVGYIISGIKTSREVKVGDTITHVAKPAKEAIAGFEEVKPMVFAGVYPIEAEDFENLRTSLEKLQLNDASLTFQPESSVALGFGFRCGFLGLLHMEIVQERLDREFNMNVITTVPNVSYKVYDKKGGCKEVHNPSGLPEPTLIDHIEEPFIRASVITNTAYIGPIMTLCLGKRGVLVKQEYISGDRVEIFYDLPLGEIVIDFYDKLKSISKGYASFDYHLHDFRESKLVKLDILLNGEPVDALSTLTHVDNSVTFGQRMCEKLKELIPRQQFEIAIQAAIGAKIIARETIKPVRKDVTAKCYGGDISRKRKLLEKQKEGKKRMKQIGTVEVPQKAFLAVLKLD</sequence>
<comment type="function">
    <text evidence="1">Required for accurate and efficient protein synthesis under certain stress conditions. May act as a fidelity factor of the translation reaction, by catalyzing a one-codon backward translocation of tRNAs on improperly translocated ribosomes. Back-translocation proceeds from a post-translocation (POST) complex to a pre-translocation (PRE) complex, thus giving elongation factor G a second chance to translocate the tRNAs correctly. Binds to ribosomes in a GTP-dependent manner.</text>
</comment>
<comment type="catalytic activity">
    <reaction evidence="1">
        <text>GTP + H2O = GDP + phosphate + H(+)</text>
        <dbReference type="Rhea" id="RHEA:19669"/>
        <dbReference type="ChEBI" id="CHEBI:15377"/>
        <dbReference type="ChEBI" id="CHEBI:15378"/>
        <dbReference type="ChEBI" id="CHEBI:37565"/>
        <dbReference type="ChEBI" id="CHEBI:43474"/>
        <dbReference type="ChEBI" id="CHEBI:58189"/>
        <dbReference type="EC" id="3.6.5.n1"/>
    </reaction>
</comment>
<comment type="subcellular location">
    <subcellularLocation>
        <location evidence="1">Cell inner membrane</location>
        <topology evidence="1">Peripheral membrane protein</topology>
        <orientation evidence="1">Cytoplasmic side</orientation>
    </subcellularLocation>
</comment>
<comment type="similarity">
    <text evidence="1">Belongs to the TRAFAC class translation factor GTPase superfamily. Classic translation factor GTPase family. LepA subfamily.</text>
</comment>
<keyword id="KW-0997">Cell inner membrane</keyword>
<keyword id="KW-1003">Cell membrane</keyword>
<keyword id="KW-0342">GTP-binding</keyword>
<keyword id="KW-0378">Hydrolase</keyword>
<keyword id="KW-0472">Membrane</keyword>
<keyword id="KW-0547">Nucleotide-binding</keyword>
<keyword id="KW-0648">Protein biosynthesis</keyword>
<reference key="1">
    <citation type="journal article" date="2008" name="DNA Res.">
        <title>Determination of the genome sequence of Porphyromonas gingivalis strain ATCC 33277 and genomic comparison with strain W83 revealed extensive genome rearrangements in P. gingivalis.</title>
        <authorList>
            <person name="Naito M."/>
            <person name="Hirakawa H."/>
            <person name="Yamashita A."/>
            <person name="Ohara N."/>
            <person name="Shoji M."/>
            <person name="Yukitake H."/>
            <person name="Nakayama K."/>
            <person name="Toh H."/>
            <person name="Yoshimura F."/>
            <person name="Kuhara S."/>
            <person name="Hattori M."/>
            <person name="Hayashi T."/>
            <person name="Nakayama K."/>
        </authorList>
    </citation>
    <scope>NUCLEOTIDE SEQUENCE [LARGE SCALE GENOMIC DNA]</scope>
    <source>
        <strain>ATCC 33277 / DSM 20709 / CIP 103683 / JCM 12257 / NCTC 11834 / 2561</strain>
    </source>
</reference>
<protein>
    <recommendedName>
        <fullName evidence="1">Elongation factor 4</fullName>
        <shortName evidence="1">EF-4</shortName>
        <ecNumber evidence="1">3.6.5.n1</ecNumber>
    </recommendedName>
    <alternativeName>
        <fullName evidence="1">Ribosomal back-translocase LepA</fullName>
    </alternativeName>
</protein>
<gene>
    <name evidence="1" type="primary">lepA</name>
    <name type="ordered locus">PGN_1377</name>
</gene>
<feature type="chain" id="PRO_1000092425" description="Elongation factor 4">
    <location>
        <begin position="1"/>
        <end position="595"/>
    </location>
</feature>
<feature type="domain" description="tr-type G">
    <location>
        <begin position="2"/>
        <end position="183"/>
    </location>
</feature>
<feature type="binding site" evidence="1">
    <location>
        <begin position="14"/>
        <end position="19"/>
    </location>
    <ligand>
        <name>GTP</name>
        <dbReference type="ChEBI" id="CHEBI:37565"/>
    </ligand>
</feature>
<feature type="binding site" evidence="1">
    <location>
        <begin position="130"/>
        <end position="133"/>
    </location>
    <ligand>
        <name>GTP</name>
        <dbReference type="ChEBI" id="CHEBI:37565"/>
    </ligand>
</feature>
<evidence type="ECO:0000255" key="1">
    <source>
        <dbReference type="HAMAP-Rule" id="MF_00071"/>
    </source>
</evidence>